<reference key="1">
    <citation type="journal article" date="2000" name="J. Biol. Chem.">
        <title>Molecular cloning and expression of chondroitin 4-sulfotransferase.</title>
        <authorList>
            <person name="Yamauchi S."/>
            <person name="Mita S."/>
            <person name="Matsubara T."/>
            <person name="Fukuta M."/>
            <person name="Habuchi H."/>
            <person name="Kimata K."/>
            <person name="Habuchi O."/>
        </authorList>
    </citation>
    <scope>NUCLEOTIDE SEQUENCE [MRNA]</scope>
    <scope>ENZYME ACTIVITY</scope>
    <scope>TISSUE SPECIFICITY</scope>
    <source>
        <tissue>Brain</tissue>
    </source>
</reference>
<reference key="2">
    <citation type="submission" date="2000-05" db="EMBL/GenBank/DDBJ databases">
        <title>Cloning and expression of molecules homologous to HNK-1 sulfotransferase.</title>
        <authorList>
            <person name="Xia G."/>
            <person name="Evers M.R."/>
            <person name="Schachner M."/>
        </authorList>
    </citation>
    <scope>NUCLEOTIDE SEQUENCE [MRNA]</scope>
</reference>
<reference key="3">
    <citation type="journal article" date="2002" name="Mech. Dev.">
        <title>A high-throughput induction gene trap approach defines C4ST as a target of BMP signaling.</title>
        <authorList>
            <person name="Klueppel M."/>
            <person name="Vallis K.A."/>
            <person name="Wrana J.L."/>
        </authorList>
    </citation>
    <scope>DEVELOPMENTAL STAGE</scope>
    <scope>INDUCTION</scope>
</reference>
<feature type="chain" id="PRO_0000189665" description="Carbohydrate sulfotransferase 11">
    <location>
        <begin position="1"/>
        <end position="352"/>
    </location>
</feature>
<feature type="topological domain" description="Cytoplasmic" evidence="2">
    <location>
        <begin position="1"/>
        <end position="16"/>
    </location>
</feature>
<feature type="transmembrane region" description="Helical; Signal-anchor for type II membrane protein" evidence="2">
    <location>
        <begin position="17"/>
        <end position="37"/>
    </location>
</feature>
<feature type="topological domain" description="Lumenal" evidence="2">
    <location>
        <begin position="38"/>
        <end position="352"/>
    </location>
</feature>
<feature type="binding site" evidence="1">
    <location>
        <begin position="124"/>
        <end position="130"/>
    </location>
    <ligand>
        <name>3'-phosphoadenylyl sulfate</name>
        <dbReference type="ChEBI" id="CHEBI:58339"/>
    </ligand>
</feature>
<feature type="binding site" evidence="1">
    <location>
        <begin position="186"/>
        <end position="194"/>
    </location>
    <ligand>
        <name>3'-phosphoadenylyl sulfate</name>
        <dbReference type="ChEBI" id="CHEBI:58339"/>
    </ligand>
</feature>
<feature type="glycosylation site" description="N-linked (GlcNAc...) asparagine" evidence="2">
    <location>
        <position position="205"/>
    </location>
</feature>
<feature type="glycosylation site" description="N-linked (GlcNAc...) asparagine" evidence="2">
    <location>
        <position position="223"/>
    </location>
</feature>
<feature type="glycosylation site" description="N-linked (GlcNAc...) asparagine" evidence="2">
    <location>
        <position position="321"/>
    </location>
</feature>
<feature type="glycosylation site" description="N-linked (GlcNAc...) asparagine" evidence="1">
    <location>
        <position position="342"/>
    </location>
</feature>
<feature type="sequence conflict" description="In Ref. 2; CAB92141." evidence="5" ref="2">
    <original>F</original>
    <variation>L</variation>
    <location>
        <position position="255"/>
    </location>
</feature>
<keyword id="KW-0119">Carbohydrate metabolism</keyword>
<keyword id="KW-0325">Glycoprotein</keyword>
<keyword id="KW-0333">Golgi apparatus</keyword>
<keyword id="KW-0472">Membrane</keyword>
<keyword id="KW-1185">Reference proteome</keyword>
<keyword id="KW-0735">Signal-anchor</keyword>
<keyword id="KW-0808">Transferase</keyword>
<keyword id="KW-0812">Transmembrane</keyword>
<keyword id="KW-1133">Transmembrane helix</keyword>
<sequence length="352" mass="41632">MKPALLEVMRMNRICRMVLATCFGSFILVIFYFQSMLHPVMRRNPFGVDICCRKGSRSPLQELYNPIQLELSNTAILHQMRRDQVTDTCRANSAMSRKRRVLTPNDLKHLVVDEDHELIYCYVPKVACTNWKRLMMVLSGRGKYSDPMEIPANEAHVSANLKTLNQYSIPEINHRLKSYMKFLFVREPFERLVSAYRNKFTQKYNTSFHKRYGTKIIRRQRKNATQEALRKGDDVKFEEFVAYLIDPHTQREEPFNEHWQTVYSLCHPCHIHYDLVGKYETLEEDSNYVLQLAGVSGYLKFPTYAKSTRTTDEMTTEFFQNISAEHQTQLYEVYKLDFLMFNYSVPNYLKLD</sequence>
<accession>Q9JME2</accession>
<accession>Q9JJS2</accession>
<proteinExistence type="evidence at transcript level"/>
<evidence type="ECO:0000250" key="1"/>
<evidence type="ECO:0000255" key="2"/>
<evidence type="ECO:0000269" key="3">
    <source>
    </source>
</evidence>
<evidence type="ECO:0000269" key="4">
    <source>
    </source>
</evidence>
<evidence type="ECO:0000305" key="5"/>
<name>CHSTB_MOUSE</name>
<dbReference type="EC" id="2.8.2.5"/>
<dbReference type="EMBL" id="AB030378">
    <property type="protein sequence ID" value="BAA92942.1"/>
    <property type="molecule type" value="mRNA"/>
</dbReference>
<dbReference type="EMBL" id="AJ289133">
    <property type="protein sequence ID" value="CAB92141.1"/>
    <property type="molecule type" value="mRNA"/>
</dbReference>
<dbReference type="CCDS" id="CCDS24074.1"/>
<dbReference type="RefSeq" id="NP_067414.2">
    <property type="nucleotide sequence ID" value="NM_021439.4"/>
</dbReference>
<dbReference type="FunCoup" id="Q9JME2">
    <property type="interactions" value="160"/>
</dbReference>
<dbReference type="STRING" id="10090.ENSMUSP00000045349"/>
<dbReference type="GlyCosmos" id="Q9JME2">
    <property type="glycosylation" value="4 sites, No reported glycans"/>
</dbReference>
<dbReference type="GlyGen" id="Q9JME2">
    <property type="glycosylation" value="4 sites, 2 N-linked glycans (2 sites)"/>
</dbReference>
<dbReference type="iPTMnet" id="Q9JME2"/>
<dbReference type="PhosphoSitePlus" id="Q9JME2"/>
<dbReference type="SwissPalm" id="Q9JME2"/>
<dbReference type="PaxDb" id="10090-ENSMUSP00000045349"/>
<dbReference type="ProteomicsDB" id="281679"/>
<dbReference type="Antibodypedia" id="30604">
    <property type="antibodies" value="177 antibodies from 26 providers"/>
</dbReference>
<dbReference type="DNASU" id="58250"/>
<dbReference type="Ensembl" id="ENSMUST00000040110.8">
    <property type="protein sequence ID" value="ENSMUSP00000045349.8"/>
    <property type="gene ID" value="ENSMUSG00000034612.8"/>
</dbReference>
<dbReference type="GeneID" id="58250"/>
<dbReference type="KEGG" id="mmu:58250"/>
<dbReference type="UCSC" id="uc007gke.1">
    <property type="organism name" value="mouse"/>
</dbReference>
<dbReference type="AGR" id="MGI:1927166"/>
<dbReference type="CTD" id="50515"/>
<dbReference type="MGI" id="MGI:1927166">
    <property type="gene designation" value="Chst11"/>
</dbReference>
<dbReference type="VEuPathDB" id="HostDB:ENSMUSG00000034612"/>
<dbReference type="eggNOG" id="KOG4651">
    <property type="taxonomic scope" value="Eukaryota"/>
</dbReference>
<dbReference type="GeneTree" id="ENSGT00940000159167"/>
<dbReference type="HOGENOM" id="CLU_043398_1_1_1"/>
<dbReference type="InParanoid" id="Q9JME2"/>
<dbReference type="OMA" id="ISMEHQT"/>
<dbReference type="OrthoDB" id="2019940at2759"/>
<dbReference type="PhylomeDB" id="Q9JME2"/>
<dbReference type="TreeFam" id="TF325581"/>
<dbReference type="BRENDA" id="2.8.2.5">
    <property type="organism ID" value="3474"/>
</dbReference>
<dbReference type="Reactome" id="R-MMU-2022870">
    <property type="pathway name" value="Chondroitin sulfate biosynthesis"/>
</dbReference>
<dbReference type="SABIO-RK" id="Q9JME2"/>
<dbReference type="BioGRID-ORCS" id="58250">
    <property type="hits" value="0 hits in 79 CRISPR screens"/>
</dbReference>
<dbReference type="ChiTaRS" id="Chst11">
    <property type="organism name" value="mouse"/>
</dbReference>
<dbReference type="PRO" id="PR:Q9JME2"/>
<dbReference type="Proteomes" id="UP000000589">
    <property type="component" value="Chromosome 10"/>
</dbReference>
<dbReference type="RNAct" id="Q9JME2">
    <property type="molecule type" value="protein"/>
</dbReference>
<dbReference type="Bgee" id="ENSMUSG00000034612">
    <property type="expression patterns" value="Expressed in humerus cartilage element and 231 other cell types or tissues"/>
</dbReference>
<dbReference type="ExpressionAtlas" id="Q9JME2">
    <property type="expression patterns" value="baseline and differential"/>
</dbReference>
<dbReference type="GO" id="GO:0000139">
    <property type="term" value="C:Golgi membrane"/>
    <property type="evidence" value="ECO:0007669"/>
    <property type="project" value="UniProtKB-SubCell"/>
</dbReference>
<dbReference type="GO" id="GO:0047756">
    <property type="term" value="F:chondroitin 4-sulfotransferase activity"/>
    <property type="evidence" value="ECO:0007669"/>
    <property type="project" value="UniProtKB-EC"/>
</dbReference>
<dbReference type="GO" id="GO:0001537">
    <property type="term" value="F:dermatan 4-sulfotransferase activity"/>
    <property type="evidence" value="ECO:0007669"/>
    <property type="project" value="Ensembl"/>
</dbReference>
<dbReference type="GO" id="GO:0050659">
    <property type="term" value="F:N-acetylgalactosamine 4-sulfate 6-O-sulfotransferase activity"/>
    <property type="evidence" value="ECO:0000314"/>
    <property type="project" value="MGI"/>
</dbReference>
<dbReference type="GO" id="GO:0008146">
    <property type="term" value="F:sulfotransferase activity"/>
    <property type="evidence" value="ECO:0000314"/>
    <property type="project" value="MGI"/>
</dbReference>
<dbReference type="GO" id="GO:0006915">
    <property type="term" value="P:apoptotic process"/>
    <property type="evidence" value="ECO:0000315"/>
    <property type="project" value="MGI"/>
</dbReference>
<dbReference type="GO" id="GO:0016051">
    <property type="term" value="P:carbohydrate biosynthetic process"/>
    <property type="evidence" value="ECO:0007669"/>
    <property type="project" value="InterPro"/>
</dbReference>
<dbReference type="GO" id="GO:0051216">
    <property type="term" value="P:cartilage development"/>
    <property type="evidence" value="ECO:0000315"/>
    <property type="project" value="MGI"/>
</dbReference>
<dbReference type="GO" id="GO:0002063">
    <property type="term" value="P:chondrocyte development"/>
    <property type="evidence" value="ECO:0000315"/>
    <property type="project" value="MGI"/>
</dbReference>
<dbReference type="GO" id="GO:0050650">
    <property type="term" value="P:chondroitin sulfate proteoglycan biosynthetic process"/>
    <property type="evidence" value="ECO:0000314"/>
    <property type="project" value="MGI"/>
</dbReference>
<dbReference type="GO" id="GO:0050654">
    <property type="term" value="P:chondroitin sulfate proteoglycan metabolic process"/>
    <property type="evidence" value="ECO:0000315"/>
    <property type="project" value="MGI"/>
</dbReference>
<dbReference type="GO" id="GO:0048589">
    <property type="term" value="P:developmental growth"/>
    <property type="evidence" value="ECO:0000315"/>
    <property type="project" value="MGI"/>
</dbReference>
<dbReference type="GO" id="GO:0042733">
    <property type="term" value="P:embryonic digit morphogenesis"/>
    <property type="evidence" value="ECO:0000315"/>
    <property type="project" value="MGI"/>
</dbReference>
<dbReference type="GO" id="GO:0030326">
    <property type="term" value="P:embryonic limb morphogenesis"/>
    <property type="evidence" value="ECO:0000315"/>
    <property type="project" value="MGI"/>
</dbReference>
<dbReference type="GO" id="GO:0048704">
    <property type="term" value="P:embryonic skeletal system morphogenesis"/>
    <property type="evidence" value="ECO:0000315"/>
    <property type="project" value="MGI"/>
</dbReference>
<dbReference type="GO" id="GO:0048703">
    <property type="term" value="P:embryonic viscerocranium morphogenesis"/>
    <property type="evidence" value="ECO:0000315"/>
    <property type="project" value="MGI"/>
</dbReference>
<dbReference type="GO" id="GO:0001701">
    <property type="term" value="P:in utero embryonic development"/>
    <property type="evidence" value="ECO:0000315"/>
    <property type="project" value="MGI"/>
</dbReference>
<dbReference type="GO" id="GO:0043066">
    <property type="term" value="P:negative regulation of apoptotic process"/>
    <property type="evidence" value="ECO:0000315"/>
    <property type="project" value="MGI"/>
</dbReference>
<dbReference type="GO" id="GO:0030512">
    <property type="term" value="P:negative regulation of transforming growth factor beta receptor signaling pathway"/>
    <property type="evidence" value="ECO:0000315"/>
    <property type="project" value="MGI"/>
</dbReference>
<dbReference type="GO" id="GO:0033037">
    <property type="term" value="P:polysaccharide localization"/>
    <property type="evidence" value="ECO:0000315"/>
    <property type="project" value="MGI"/>
</dbReference>
<dbReference type="GO" id="GO:0036342">
    <property type="term" value="P:post-anal tail morphogenesis"/>
    <property type="evidence" value="ECO:0000315"/>
    <property type="project" value="MGI"/>
</dbReference>
<dbReference type="GO" id="GO:0009791">
    <property type="term" value="P:post-embryonic development"/>
    <property type="evidence" value="ECO:0000315"/>
    <property type="project" value="MGI"/>
</dbReference>
<dbReference type="GO" id="GO:0042127">
    <property type="term" value="P:regulation of cell population proliferation"/>
    <property type="evidence" value="ECO:0000315"/>
    <property type="project" value="MGI"/>
</dbReference>
<dbReference type="GO" id="GO:0007585">
    <property type="term" value="P:respiratory gaseous exchange by respiratory system"/>
    <property type="evidence" value="ECO:0000315"/>
    <property type="project" value="MGI"/>
</dbReference>
<dbReference type="GO" id="GO:0007179">
    <property type="term" value="P:transforming growth factor beta receptor signaling pathway"/>
    <property type="evidence" value="ECO:0000315"/>
    <property type="project" value="MGI"/>
</dbReference>
<dbReference type="InterPro" id="IPR018011">
    <property type="entry name" value="Carb_sulfotrans_8-10"/>
</dbReference>
<dbReference type="InterPro" id="IPR005331">
    <property type="entry name" value="Sulfotransferase"/>
</dbReference>
<dbReference type="PANTHER" id="PTHR12137">
    <property type="entry name" value="CARBOHYDRATE SULFOTRANSFERASE"/>
    <property type="match status" value="1"/>
</dbReference>
<dbReference type="PANTHER" id="PTHR12137:SF32">
    <property type="entry name" value="CARBOHYDRATE SULFOTRANSFERASE 11"/>
    <property type="match status" value="1"/>
</dbReference>
<dbReference type="Pfam" id="PF03567">
    <property type="entry name" value="Sulfotransfer_2"/>
    <property type="match status" value="1"/>
</dbReference>
<gene>
    <name type="primary">Chst11</name>
</gene>
<protein>
    <recommendedName>
        <fullName>Carbohydrate sulfotransferase 11</fullName>
        <ecNumber>2.8.2.5</ecNumber>
    </recommendedName>
    <alternativeName>
        <fullName>Chondroitin 4-O-sulfotransferase 1</fullName>
    </alternativeName>
    <alternativeName>
        <fullName>Chondroitin 4-sulfotransferase 1</fullName>
        <shortName>C4S-1</shortName>
        <shortName>C4ST-1</shortName>
        <shortName>C4ST1</shortName>
    </alternativeName>
</protein>
<organism>
    <name type="scientific">Mus musculus</name>
    <name type="common">Mouse</name>
    <dbReference type="NCBI Taxonomy" id="10090"/>
    <lineage>
        <taxon>Eukaryota</taxon>
        <taxon>Metazoa</taxon>
        <taxon>Chordata</taxon>
        <taxon>Craniata</taxon>
        <taxon>Vertebrata</taxon>
        <taxon>Euteleostomi</taxon>
        <taxon>Mammalia</taxon>
        <taxon>Eutheria</taxon>
        <taxon>Euarchontoglires</taxon>
        <taxon>Glires</taxon>
        <taxon>Rodentia</taxon>
        <taxon>Myomorpha</taxon>
        <taxon>Muroidea</taxon>
        <taxon>Muridae</taxon>
        <taxon>Murinae</taxon>
        <taxon>Mus</taxon>
        <taxon>Mus</taxon>
    </lineage>
</organism>
<comment type="function">
    <text>Catalyzes the transfer of sulfate to position 4 of the N-acetylgalactosamine (GalNAc) residue of chondroitin. Chondroitin sulfate constitutes the predominant proteoglycan present in cartilage and is distributed on the surfaces of many cells and extracellular matrices. Can also sulfate Gal residues in desulfated dermatan sulfate. Preferentially sulfates in GlcA-&gt;GalNAc unit than in IdoA-&gt;GalNAc unit. Does not form 4, 6-di-O-sulfated GalNAc when chondroitin sulfate C is used as an acceptor.</text>
</comment>
<comment type="catalytic activity">
    <reaction evidence="3">
        <text>chondroitin beta-D-glucuronate + n 3'-phosphoadenylyl sulfate = chondroitin 4'-sulfate + n adenosine 3',5'-bisphosphate + n H(+)</text>
        <dbReference type="Rhea" id="RHEA:16101"/>
        <dbReference type="Rhea" id="RHEA-COMP:9827"/>
        <dbReference type="Rhea" id="RHEA-COMP:9829"/>
        <dbReference type="ChEBI" id="CHEBI:15378"/>
        <dbReference type="ChEBI" id="CHEBI:57652"/>
        <dbReference type="ChEBI" id="CHEBI:58339"/>
        <dbReference type="ChEBI" id="CHEBI:58343"/>
        <dbReference type="ChEBI" id="CHEBI:58422"/>
        <dbReference type="EC" id="2.8.2.5"/>
    </reaction>
</comment>
<comment type="subcellular location">
    <subcellularLocation>
        <location evidence="1">Golgi apparatus membrane</location>
        <topology evidence="1">Single-pass type II membrane protein</topology>
    </subcellularLocation>
</comment>
<comment type="tissue specificity">
    <text evidence="3">Predominantly expressed in brain and kidney. Also expressed at weaker level in heart, spleen and lung. Expressed in developing chondrocytes.</text>
</comment>
<comment type="developmental stage">
    <text evidence="4">First expressed at day 9.75 of embryogenesis in the apical ectodermal ridge (AER) of the developing limb buds and at the edges of branchial arches 1 and 2. Also expressed in the ventral neural tube, notochord and sympathetic ganglia and the mesonephric tubules of the developing kidneys. In the heart, it is expressed in the myocardium of the atrium and in the endocardial cushions of both the developing inflow tract and the atrioventricular valves. At day 15, it is expressed in the cartilage of developing bones, in vertebrae and cartilage of the trachea as well as in the thymus. In the forelimb, it is expressed in all developing bones, but absent from developing joint regions and was down-regulated in chondrocytes beginning to undergo mineralization, such as in the center of the ulna. At day 15, no expression in the neural tube is observed. In the heart at day 15, it is still expressed in the atrial valve, the atrioventricular valves and in the myocardium of the atrium, while in the kidney, it is expressed in the collecting tubules as well as in Bowman capsule. Interestingly, the liver displays a punctate expression at day 15. Also expressed in tooth primordia, hair follicles and mammary glands.</text>
</comment>
<comment type="induction">
    <text evidence="4">By BMP2, suggesting it is a target of BMP signaling.</text>
</comment>
<comment type="PTM">
    <text evidence="1">N-glycosylated; required for activity and stability.</text>
</comment>
<comment type="similarity">
    <text evidence="5">Belongs to the sulfotransferase 2 family.</text>
</comment>